<proteinExistence type="evidence at protein level"/>
<reference key="1">
    <citation type="journal article" date="2005" name="J. Biol. Chem.">
        <title>Ablation of the otcC gene encoding a post-polyketide hydroxylase from the oxytetracyline biosynthetic pathway in Streptomyces rimosus results in novel polyketides with altered chain length.</title>
        <authorList>
            <person name="Peric-Concha N."/>
            <person name="Borovicka B."/>
            <person name="Long P.F."/>
            <person name="Hranueli D."/>
            <person name="Waterman P.G."/>
            <person name="Hunter I.S."/>
        </authorList>
    </citation>
    <scope>NUCLEOTIDE SEQUENCE [GENOMIC DNA]</scope>
    <scope>FUNCTION</scope>
    <scope>CATALYTIC ACTIVITY</scope>
    <scope>PATHWAY</scope>
    <scope>DISRUPTION PHENOTYPE</scope>
    <scope>MUTAGENESIS OF GLY-9; GLY-11 AND GLY-14</scope>
    <source>
        <strain>R6-500</strain>
    </source>
</reference>
<sequence>MRYDVVIAGAGPTGLMLACELRLAGARTLVLERLAERVDFSKALGVHARTVELLDMRGLGRGFQAEAPKLRGGNFASLGVPLDFSSFDTRHPYALFVPQVRTETLLTGRALELGAELRRGHAVTALEQDADGVTVSVTGPEGPYEVECAYLVGCDGGGITVRKLLGIDFPGQDPHMFAVIADARFREELPHGEGMGPMRPYGVMRHDLRAWFAAFPLEPDVYRATVAFFDRPYADRRAPVTEEDVRAALTEVAGSDFGMHDVRWLSRLTDTSRQAERYRDGRVLLAGDACHIHLPAGGQGLNLGFQDAVNLGWKLGATIAGTAPPELLDTYEAERRPIAAGVLRNTRAQAVLIDPDPRYEGLRELMIELLHVPETNRYLAGLISALDVRYPMAGEHPLLGRRVPDLPLVTEDGTRQLSTYFHAARGVLLTLGCDQPLADEAAAWKDRVDLVAAEGVADPGSAVDGLTALLVRPDGYICWTAAPETGTDGLTDALRTWFGPPAM</sequence>
<name>OTCC_STRRM</name>
<feature type="chain" id="PRO_0000430628" description="Anhydrotetracycline monooxygenase">
    <location>
        <begin position="1"/>
        <end position="503"/>
    </location>
</feature>
<feature type="mutagenesis site" description="Lack of activity; when associated with A-11 and A-14." evidence="2">
    <original>G</original>
    <variation>A</variation>
    <location>
        <position position="9"/>
    </location>
</feature>
<feature type="mutagenesis site" description="Lack of activity; when associated with A-9 and A-14." evidence="2">
    <original>G</original>
    <variation>A</variation>
    <location>
        <position position="11"/>
    </location>
</feature>
<feature type="mutagenesis site" description="Lack of activity; when associated with A-9 and A-11." evidence="2">
    <original>G</original>
    <variation>A</variation>
    <location>
        <position position="14"/>
    </location>
</feature>
<organism>
    <name type="scientific">Streptomyces rimosus</name>
    <dbReference type="NCBI Taxonomy" id="1927"/>
    <lineage>
        <taxon>Bacteria</taxon>
        <taxon>Bacillati</taxon>
        <taxon>Actinomycetota</taxon>
        <taxon>Actinomycetes</taxon>
        <taxon>Kitasatosporales</taxon>
        <taxon>Streptomycetaceae</taxon>
        <taxon>Streptomyces</taxon>
    </lineage>
</organism>
<protein>
    <recommendedName>
        <fullName evidence="4">Anhydrotetracycline monooxygenase</fullName>
        <ecNumber evidence="2">1.14.13.38</ecNumber>
    </recommendedName>
</protein>
<gene>
    <name evidence="3" type="primary">otcC</name>
</gene>
<comment type="function">
    <text evidence="2">Catalyzes hydroxylation of the anthracycline structure at position C-6 during the biosynthesis of oxytetracyline.</text>
</comment>
<comment type="catalytic activity">
    <reaction evidence="2">
        <text>anhydrotetracycline + NADPH + O2 + H(+) = 5a,11a-dehydrotetracycline + NADP(+) + H2O</text>
        <dbReference type="Rhea" id="RHEA:11976"/>
        <dbReference type="ChEBI" id="CHEBI:15377"/>
        <dbReference type="ChEBI" id="CHEBI:15378"/>
        <dbReference type="ChEBI" id="CHEBI:15379"/>
        <dbReference type="ChEBI" id="CHEBI:57522"/>
        <dbReference type="ChEBI" id="CHEBI:57783"/>
        <dbReference type="ChEBI" id="CHEBI:58032"/>
        <dbReference type="ChEBI" id="CHEBI:58349"/>
        <dbReference type="EC" id="1.14.13.38"/>
    </reaction>
</comment>
<comment type="cofactor">
    <cofactor evidence="1">
        <name>FAD</name>
        <dbReference type="ChEBI" id="CHEBI:57692"/>
    </cofactor>
</comment>
<comment type="pathway">
    <text evidence="2">Antibiotic biosynthesis; oxytetracycline biosynthesis.</text>
</comment>
<comment type="disruption phenotype">
    <text evidence="2">Mutants fail to produce oxytetracyline but instead synthesize novel polyketides of shorter chain length.</text>
</comment>
<comment type="similarity">
    <text evidence="4">Belongs to the PheA/TfdB FAD monooxygenase family.</text>
</comment>
<evidence type="ECO:0000250" key="1">
    <source>
        <dbReference type="UniProtKB" id="Q54530"/>
    </source>
</evidence>
<evidence type="ECO:0000269" key="2">
    <source>
    </source>
</evidence>
<evidence type="ECO:0000303" key="3">
    <source>
    </source>
</evidence>
<evidence type="ECO:0000305" key="4"/>
<accession>Q58PK7</accession>
<keyword id="KW-0045">Antibiotic biosynthesis</keyword>
<keyword id="KW-0274">FAD</keyword>
<keyword id="KW-0285">Flavoprotein</keyword>
<keyword id="KW-0521">NADP</keyword>
<keyword id="KW-0560">Oxidoreductase</keyword>
<dbReference type="EC" id="1.14.13.38" evidence="2"/>
<dbReference type="EMBL" id="AY916128">
    <property type="protein sequence ID" value="AAX48941.1"/>
    <property type="molecule type" value="Genomic_DNA"/>
</dbReference>
<dbReference type="SMR" id="Q58PK7"/>
<dbReference type="BRENDA" id="1.14.13.38">
    <property type="organism ID" value="6084"/>
</dbReference>
<dbReference type="UniPathway" id="UPA00926"/>
<dbReference type="GO" id="GO:0047670">
    <property type="term" value="F:anhydrotetracycline monooxygenase activity"/>
    <property type="evidence" value="ECO:0007669"/>
    <property type="project" value="UniProtKB-EC"/>
</dbReference>
<dbReference type="GO" id="GO:0071949">
    <property type="term" value="F:FAD binding"/>
    <property type="evidence" value="ECO:0007669"/>
    <property type="project" value="InterPro"/>
</dbReference>
<dbReference type="GO" id="GO:0017000">
    <property type="term" value="P:antibiotic biosynthetic process"/>
    <property type="evidence" value="ECO:0007669"/>
    <property type="project" value="UniProtKB-KW"/>
</dbReference>
<dbReference type="Gene3D" id="3.40.30.120">
    <property type="match status" value="1"/>
</dbReference>
<dbReference type="Gene3D" id="3.50.50.60">
    <property type="entry name" value="FAD/NAD(P)-binding domain"/>
    <property type="match status" value="2"/>
</dbReference>
<dbReference type="InterPro" id="IPR002938">
    <property type="entry name" value="FAD-bd"/>
</dbReference>
<dbReference type="InterPro" id="IPR036188">
    <property type="entry name" value="FAD/NAD-bd_sf"/>
</dbReference>
<dbReference type="InterPro" id="IPR050641">
    <property type="entry name" value="RIFMO-like"/>
</dbReference>
<dbReference type="PANTHER" id="PTHR43004:SF19">
    <property type="entry name" value="BINDING MONOOXYGENASE, PUTATIVE (JCVI)-RELATED"/>
    <property type="match status" value="1"/>
</dbReference>
<dbReference type="PANTHER" id="PTHR43004">
    <property type="entry name" value="TRK SYSTEM POTASSIUM UPTAKE PROTEIN"/>
    <property type="match status" value="1"/>
</dbReference>
<dbReference type="Pfam" id="PF01494">
    <property type="entry name" value="FAD_binding_3"/>
    <property type="match status" value="1"/>
</dbReference>
<dbReference type="Pfam" id="PF21274">
    <property type="entry name" value="Rng_hyd_C"/>
    <property type="match status" value="1"/>
</dbReference>
<dbReference type="PRINTS" id="PR00420">
    <property type="entry name" value="RNGMNOXGNASE"/>
</dbReference>
<dbReference type="SUPFAM" id="SSF51905">
    <property type="entry name" value="FAD/NAD(P)-binding domain"/>
    <property type="match status" value="1"/>
</dbReference>